<proteinExistence type="evidence at transcript level"/>
<accession>Q865X7</accession>
<organism>
    <name type="scientific">Lama glama</name>
    <name type="common">Llama</name>
    <dbReference type="NCBI Taxonomy" id="9844"/>
    <lineage>
        <taxon>Eukaryota</taxon>
        <taxon>Metazoa</taxon>
        <taxon>Chordata</taxon>
        <taxon>Craniata</taxon>
        <taxon>Vertebrata</taxon>
        <taxon>Euteleostomi</taxon>
        <taxon>Mammalia</taxon>
        <taxon>Eutheria</taxon>
        <taxon>Laurasiatheria</taxon>
        <taxon>Artiodactyla</taxon>
        <taxon>Tylopoda</taxon>
        <taxon>Camelidae</taxon>
        <taxon>Lama</taxon>
    </lineage>
</organism>
<sequence>MAKVPDLFEDLKNCYSENEEYGSEIDHLSLNQKSFYDASHEPLHEDCMDKLMSLSTSETSKTSKLTFKESVVMVASNGKILKKRRLSLNQFITDDDLEAIANDTEEEIIKPRSVPYNLQSNVKYNYMRIVNHQCILNDALNRSIIRDPSGQYLMAAVLNNLDNAVKFDMGAYTSEEDSQLPVTLRISKTQLFVSAQNEDEPVLLKEMPETPKIIKDETNLLFFWEKHGSMDYFKSVAHPKLFIATKQEKLVHMASGPPSITDFQILEK</sequence>
<protein>
    <recommendedName>
        <fullName>Interleukin-1 alpha</fullName>
        <shortName>IL-1 alpha</shortName>
    </recommendedName>
</protein>
<evidence type="ECO:0000250" key="1"/>
<evidence type="ECO:0000250" key="2">
    <source>
        <dbReference type="UniProtKB" id="P01582"/>
    </source>
</evidence>
<evidence type="ECO:0000250" key="3">
    <source>
        <dbReference type="UniProtKB" id="P01583"/>
    </source>
</evidence>
<evidence type="ECO:0000255" key="4"/>
<evidence type="ECO:0000305" key="5"/>
<feature type="propeptide" id="PRO_0000015267" evidence="1">
    <location>
        <begin position="1"/>
        <end position="112"/>
    </location>
</feature>
<feature type="chain" id="PRO_0000015268" description="Interleukin-1 alpha">
    <location>
        <begin position="113"/>
        <end position="268"/>
    </location>
</feature>
<feature type="region of interest" description="Nuclear localization signal (NLS)" evidence="3">
    <location>
        <begin position="82"/>
        <end position="86"/>
    </location>
</feature>
<feature type="modified residue" description="N6-acetyllysine" evidence="3">
    <location>
        <position position="82"/>
    </location>
</feature>
<feature type="modified residue" description="Phosphoserine" evidence="2">
    <location>
        <position position="87"/>
    </location>
</feature>
<feature type="glycosylation site" description="N-linked (GlcNAc...) asparagine" evidence="4">
    <location>
        <position position="102"/>
    </location>
</feature>
<feature type="glycosylation site" description="N-linked (GlcNAc...) asparagine" evidence="4">
    <location>
        <position position="141"/>
    </location>
</feature>
<dbReference type="EMBL" id="AB107645">
    <property type="protein sequence ID" value="BAC75382.1"/>
    <property type="molecule type" value="mRNA"/>
</dbReference>
<dbReference type="SMR" id="Q865X7"/>
<dbReference type="GlyCosmos" id="Q865X7">
    <property type="glycosylation" value="2 sites, No reported glycans"/>
</dbReference>
<dbReference type="GO" id="GO:0005829">
    <property type="term" value="C:cytosol"/>
    <property type="evidence" value="ECO:0000250"/>
    <property type="project" value="UniProtKB"/>
</dbReference>
<dbReference type="GO" id="GO:0005615">
    <property type="term" value="C:extracellular space"/>
    <property type="evidence" value="ECO:0000250"/>
    <property type="project" value="UniProtKB"/>
</dbReference>
<dbReference type="GO" id="GO:0005634">
    <property type="term" value="C:nucleus"/>
    <property type="evidence" value="ECO:0007669"/>
    <property type="project" value="UniProtKB-SubCell"/>
</dbReference>
<dbReference type="GO" id="GO:0005507">
    <property type="term" value="F:copper ion binding"/>
    <property type="evidence" value="ECO:0000250"/>
    <property type="project" value="UniProtKB"/>
</dbReference>
<dbReference type="GO" id="GO:0005125">
    <property type="term" value="F:cytokine activity"/>
    <property type="evidence" value="ECO:0007669"/>
    <property type="project" value="UniProtKB-KW"/>
</dbReference>
<dbReference type="GO" id="GO:0005149">
    <property type="term" value="F:interleukin-1 receptor binding"/>
    <property type="evidence" value="ECO:0007669"/>
    <property type="project" value="InterPro"/>
</dbReference>
<dbReference type="GO" id="GO:0034605">
    <property type="term" value="P:cellular response to heat"/>
    <property type="evidence" value="ECO:0000250"/>
    <property type="project" value="UniProtKB"/>
</dbReference>
<dbReference type="GO" id="GO:0071222">
    <property type="term" value="P:cellular response to lipopolysaccharide"/>
    <property type="evidence" value="ECO:0007669"/>
    <property type="project" value="TreeGrafter"/>
</dbReference>
<dbReference type="GO" id="GO:0019221">
    <property type="term" value="P:cytokine-mediated signaling pathway"/>
    <property type="evidence" value="ECO:0007669"/>
    <property type="project" value="TreeGrafter"/>
</dbReference>
<dbReference type="GO" id="GO:0001660">
    <property type="term" value="P:fever generation"/>
    <property type="evidence" value="ECO:0007669"/>
    <property type="project" value="UniProtKB-KW"/>
</dbReference>
<dbReference type="GO" id="GO:0006955">
    <property type="term" value="P:immune response"/>
    <property type="evidence" value="ECO:0007669"/>
    <property type="project" value="InterPro"/>
</dbReference>
<dbReference type="GO" id="GO:0051781">
    <property type="term" value="P:positive regulation of cell division"/>
    <property type="evidence" value="ECO:0007669"/>
    <property type="project" value="UniProtKB-KW"/>
</dbReference>
<dbReference type="GO" id="GO:0010628">
    <property type="term" value="P:positive regulation of gene expression"/>
    <property type="evidence" value="ECO:0007669"/>
    <property type="project" value="TreeGrafter"/>
</dbReference>
<dbReference type="GO" id="GO:0033092">
    <property type="term" value="P:positive regulation of immature T cell proliferation in thymus"/>
    <property type="evidence" value="ECO:0007669"/>
    <property type="project" value="TreeGrafter"/>
</dbReference>
<dbReference type="GO" id="GO:0046688">
    <property type="term" value="P:response to copper ion"/>
    <property type="evidence" value="ECO:0000250"/>
    <property type="project" value="UniProtKB"/>
</dbReference>
<dbReference type="CDD" id="cd23295">
    <property type="entry name" value="beta-trefoil_IL1A"/>
    <property type="match status" value="1"/>
</dbReference>
<dbReference type="FunFam" id="2.80.10.50:FF:000049">
    <property type="entry name" value="Interleukin-1 alpha"/>
    <property type="match status" value="1"/>
</dbReference>
<dbReference type="Gene3D" id="2.80.10.50">
    <property type="match status" value="1"/>
</dbReference>
<dbReference type="InterPro" id="IPR003295">
    <property type="entry name" value="IL-1_alpha"/>
</dbReference>
<dbReference type="InterPro" id="IPR020877">
    <property type="entry name" value="IL-1_CS"/>
</dbReference>
<dbReference type="InterPro" id="IPR000975">
    <property type="entry name" value="IL-1_fam"/>
</dbReference>
<dbReference type="InterPro" id="IPR003502">
    <property type="entry name" value="IL-1_propep"/>
</dbReference>
<dbReference type="InterPro" id="IPR008996">
    <property type="entry name" value="IL1/FGF"/>
</dbReference>
<dbReference type="PANTHER" id="PTHR10078:SF33">
    <property type="entry name" value="INTERLEUKIN-1 ALPHA"/>
    <property type="match status" value="1"/>
</dbReference>
<dbReference type="PANTHER" id="PTHR10078">
    <property type="entry name" value="INTERLEUKIN-1 FAMILY MEMBER"/>
    <property type="match status" value="1"/>
</dbReference>
<dbReference type="Pfam" id="PF00340">
    <property type="entry name" value="IL1"/>
    <property type="match status" value="1"/>
</dbReference>
<dbReference type="Pfam" id="PF02394">
    <property type="entry name" value="IL1_propep"/>
    <property type="match status" value="1"/>
</dbReference>
<dbReference type="PRINTS" id="PR00264">
    <property type="entry name" value="INTERLEUKIN1"/>
</dbReference>
<dbReference type="PRINTS" id="PR01358">
    <property type="entry name" value="INTRLEUKIN1A"/>
</dbReference>
<dbReference type="PRINTS" id="PR01357">
    <property type="entry name" value="INTRLEUKN1AB"/>
</dbReference>
<dbReference type="SMART" id="SM00125">
    <property type="entry name" value="IL1"/>
    <property type="match status" value="1"/>
</dbReference>
<dbReference type="SUPFAM" id="SSF50353">
    <property type="entry name" value="Cytokine"/>
    <property type="match status" value="1"/>
</dbReference>
<dbReference type="PROSITE" id="PS00253">
    <property type="entry name" value="INTERLEUKIN_1"/>
    <property type="match status" value="1"/>
</dbReference>
<name>IL1A_LAMGL</name>
<gene>
    <name type="primary">IL1A</name>
</gene>
<comment type="function">
    <text evidence="3">Cytokine constitutively present intracellularly in nearly all resting non-hematopoietic cells that plays an important role in inflammation and bridges the innate and adaptive immune systems. After binding to its receptor IL1R1 together with its accessory protein IL1RAP, forms the high affinity interleukin-1 receptor complex. Signaling involves the recruitment of adapter molecules such as MYD88, IRAK1 or IRAK4. In turn, mediates the activation of NF-kappa-B and the three MAPK pathways p38, p42/p44 and JNK pathways. Within the cell, acts as an alarmin and cell death results in its liberation in the extracellular space after disruption of the cell membrane to induce inflammation and alert the host to injury or damage. In addition to its role as a danger signal, which occurs when the cytokine is passively released by cell necrosis, directly senses DNA damage and acts as signal for genotoxic stress without loss of cell integrity.</text>
</comment>
<comment type="subunit">
    <text evidence="3">Monomer. Interacts with TMED10; the interaction mediates the translocation from the cytoplasm into the ERGIC (endoplasmic reticulum-Golgi intermediate compartment) and thereby secretion. Interacts with IL1R1. Interacts with S100A13; this interaction is the first step in the export of IL1A, followed by direct translocation of this complex across the plasma membrane.</text>
</comment>
<comment type="subcellular location">
    <subcellularLocation>
        <location evidence="3">Nucleus</location>
    </subcellularLocation>
    <subcellularLocation>
        <location evidence="3">Cytoplasm</location>
    </subcellularLocation>
    <subcellularLocation>
        <location evidence="3">Secreted</location>
    </subcellularLocation>
    <text evidence="3">The lack of a specific hydrophobic segment in the precursor sequence suggests that IL-1 is released by damaged cells or is secreted by a mechanism differing from that used for other secretory proteins. The secretion is dependent on protein unfolding and facilitated by the cargo receptor TMED10; it results in protein translocation from the cytoplasm into the ERGIC (endoplasmic reticulum-Golgi intermediate compartment) followed by vesicle entry and secretion. Recruited to DNA damage sites and secreted after genotoxic stress.</text>
</comment>
<comment type="domain">
    <text>The similarity among the IL-1 precursors suggests that the amino ends of these proteins serve some as yet undefined function.</text>
</comment>
<comment type="PTM">
    <text evidence="3">Acetylated within its nuclear localization sequence, which impacts subcellular localization.</text>
</comment>
<comment type="PTM">
    <text evidence="3">Proteolytic processed by CAPN1 in a calcium-dependent manner. Cleavage from 31 kDa precursor to 18 kDa biologically active molecules.</text>
</comment>
<comment type="PTM">
    <text evidence="3">Phosphorylated. Phosphorylation greatly enhances susceptibility to digestion and promotes the conversion of pre-IL1A alpha to the biologically active IL1A.</text>
</comment>
<comment type="similarity">
    <text evidence="5">Belongs to the IL-1 family.</text>
</comment>
<reference key="1">
    <citation type="submission" date="2003-04" db="EMBL/GenBank/DDBJ databases">
        <title>Cloning and sequence analysis of cytokine cDNAs of llama and camel.</title>
        <authorList>
            <person name="Odbileg R."/>
            <person name="Lee S.-I."/>
            <person name="Yoshida R."/>
            <person name="Chang K.-S."/>
            <person name="Ohashi K."/>
            <person name="Sugimoto C."/>
            <person name="Onuma M."/>
        </authorList>
    </citation>
    <scope>NUCLEOTIDE SEQUENCE [MRNA]</scope>
</reference>
<keyword id="KW-0007">Acetylation</keyword>
<keyword id="KW-0202">Cytokine</keyword>
<keyword id="KW-0963">Cytoplasm</keyword>
<keyword id="KW-0325">Glycoprotein</keyword>
<keyword id="KW-0395">Inflammatory response</keyword>
<keyword id="KW-0497">Mitogen</keyword>
<keyword id="KW-0539">Nucleus</keyword>
<keyword id="KW-0597">Phosphoprotein</keyword>
<keyword id="KW-0666">Pyrogen</keyword>
<keyword id="KW-0964">Secreted</keyword>